<protein>
    <recommendedName>
        <fullName evidence="1">ATP synthase subunit b</fullName>
    </recommendedName>
    <alternativeName>
        <fullName evidence="1">ATP synthase F(0) sector subunit b</fullName>
    </alternativeName>
    <alternativeName>
        <fullName evidence="1">ATPase subunit I</fullName>
    </alternativeName>
    <alternativeName>
        <fullName evidence="1">F-type ATPase subunit b</fullName>
        <shortName evidence="1">F-ATPase subunit b</shortName>
    </alternativeName>
</protein>
<evidence type="ECO:0000255" key="1">
    <source>
        <dbReference type="HAMAP-Rule" id="MF_01398"/>
    </source>
</evidence>
<evidence type="ECO:0000256" key="2">
    <source>
        <dbReference type="SAM" id="MobiDB-lite"/>
    </source>
</evidence>
<proteinExistence type="inferred from homology"/>
<comment type="function">
    <text evidence="1">F(1)F(0) ATP synthase produces ATP from ADP in the presence of a proton or sodium gradient. F-type ATPases consist of two structural domains, F(1) containing the extramembraneous catalytic core and F(0) containing the membrane proton channel, linked together by a central stalk and a peripheral stalk. During catalysis, ATP synthesis in the catalytic domain of F(1) is coupled via a rotary mechanism of the central stalk subunits to proton translocation.</text>
</comment>
<comment type="function">
    <text evidence="1">Component of the F(0) channel, it forms part of the peripheral stalk, linking F(1) to F(0).</text>
</comment>
<comment type="subunit">
    <text evidence="1">F-type ATPases have 2 components, F(1) - the catalytic core - and F(0) - the membrane proton channel. F(1) has five subunits: alpha(3), beta(3), gamma(1), delta(1), epsilon(1). F(0) has three main subunits: a(1), b(2) and c(10-14). The alpha and beta chains form an alternating ring which encloses part of the gamma chain. F(1) is attached to F(0) by a central stalk formed by the gamma and epsilon chains, while a peripheral stalk is formed by the delta and b chains.</text>
</comment>
<comment type="subcellular location">
    <subcellularLocation>
        <location evidence="1">Cell membrane</location>
        <topology evidence="1">Single-pass membrane protein</topology>
    </subcellularLocation>
</comment>
<comment type="similarity">
    <text evidence="1">Belongs to the ATPase B chain family.</text>
</comment>
<name>ATPF_LACPL</name>
<keyword id="KW-0066">ATP synthesis</keyword>
<keyword id="KW-1003">Cell membrane</keyword>
<keyword id="KW-0138">CF(0)</keyword>
<keyword id="KW-0375">Hydrogen ion transport</keyword>
<keyword id="KW-0406">Ion transport</keyword>
<keyword id="KW-0472">Membrane</keyword>
<keyword id="KW-1185">Reference proteome</keyword>
<keyword id="KW-0812">Transmembrane</keyword>
<keyword id="KW-1133">Transmembrane helix</keyword>
<keyword id="KW-0813">Transport</keyword>
<reference key="1">
    <citation type="journal article" date="2003" name="Proc. Natl. Acad. Sci. U.S.A.">
        <title>Complete genome sequence of Lactobacillus plantarum WCFS1.</title>
        <authorList>
            <person name="Kleerebezem M."/>
            <person name="Boekhorst J."/>
            <person name="van Kranenburg R."/>
            <person name="Molenaar D."/>
            <person name="Kuipers O.P."/>
            <person name="Leer R."/>
            <person name="Tarchini R."/>
            <person name="Peters S.A."/>
            <person name="Sandbrink H.M."/>
            <person name="Fiers M.W.E.J."/>
            <person name="Stiekema W."/>
            <person name="Klein Lankhorst R.M."/>
            <person name="Bron P.A."/>
            <person name="Hoffer S.M."/>
            <person name="Nierop Groot M.N."/>
            <person name="Kerkhoven R."/>
            <person name="De Vries M."/>
            <person name="Ursing B."/>
            <person name="De Vos W.M."/>
            <person name="Siezen R.J."/>
        </authorList>
    </citation>
    <scope>NUCLEOTIDE SEQUENCE [LARGE SCALE GENOMIC DNA]</scope>
    <source>
        <strain>ATCC BAA-793 / NCIMB 8826 / WCFS1</strain>
    </source>
</reference>
<reference key="2">
    <citation type="journal article" date="2012" name="J. Bacteriol.">
        <title>Complete resequencing and reannotation of the Lactobacillus plantarum WCFS1 genome.</title>
        <authorList>
            <person name="Siezen R.J."/>
            <person name="Francke C."/>
            <person name="Renckens B."/>
            <person name="Boekhorst J."/>
            <person name="Wels M."/>
            <person name="Kleerebezem M."/>
            <person name="van Hijum S.A."/>
        </authorList>
    </citation>
    <scope>NUCLEOTIDE SEQUENCE [LARGE SCALE GENOMIC DNA]</scope>
    <scope>GENOME REANNOTATION</scope>
    <source>
        <strain>ATCC BAA-793 / NCIMB 8826 / WCFS1</strain>
    </source>
</reference>
<dbReference type="EMBL" id="AL935263">
    <property type="protein sequence ID" value="CCC79556.1"/>
    <property type="molecule type" value="Genomic_DNA"/>
</dbReference>
<dbReference type="RefSeq" id="WP_003641439.1">
    <property type="nucleotide sequence ID" value="NC_004567.2"/>
</dbReference>
<dbReference type="RefSeq" id="YP_004890070.1">
    <property type="nucleotide sequence ID" value="NC_004567.2"/>
</dbReference>
<dbReference type="SMR" id="Q88UT9"/>
<dbReference type="STRING" id="220668.lp_2368"/>
<dbReference type="EnsemblBacteria" id="CCC79556">
    <property type="protein sequence ID" value="CCC79556"/>
    <property type="gene ID" value="lp_2368"/>
</dbReference>
<dbReference type="GeneID" id="89669625"/>
<dbReference type="KEGG" id="lpl:lp_2368"/>
<dbReference type="PATRIC" id="fig|220668.9.peg.2001"/>
<dbReference type="eggNOG" id="COG0711">
    <property type="taxonomic scope" value="Bacteria"/>
</dbReference>
<dbReference type="HOGENOM" id="CLU_079215_4_2_9"/>
<dbReference type="OrthoDB" id="282095at2"/>
<dbReference type="PhylomeDB" id="Q88UT9"/>
<dbReference type="Proteomes" id="UP000000432">
    <property type="component" value="Chromosome"/>
</dbReference>
<dbReference type="GO" id="GO:0005886">
    <property type="term" value="C:plasma membrane"/>
    <property type="evidence" value="ECO:0007669"/>
    <property type="project" value="UniProtKB-SubCell"/>
</dbReference>
<dbReference type="GO" id="GO:0045259">
    <property type="term" value="C:proton-transporting ATP synthase complex"/>
    <property type="evidence" value="ECO:0007669"/>
    <property type="project" value="UniProtKB-KW"/>
</dbReference>
<dbReference type="GO" id="GO:0046933">
    <property type="term" value="F:proton-transporting ATP synthase activity, rotational mechanism"/>
    <property type="evidence" value="ECO:0007669"/>
    <property type="project" value="UniProtKB-UniRule"/>
</dbReference>
<dbReference type="GO" id="GO:0046961">
    <property type="term" value="F:proton-transporting ATPase activity, rotational mechanism"/>
    <property type="evidence" value="ECO:0007669"/>
    <property type="project" value="TreeGrafter"/>
</dbReference>
<dbReference type="CDD" id="cd06503">
    <property type="entry name" value="ATP-synt_Fo_b"/>
    <property type="match status" value="1"/>
</dbReference>
<dbReference type="Gene3D" id="1.20.5.620">
    <property type="entry name" value="F1F0 ATP synthase subunit B, membrane domain"/>
    <property type="match status" value="1"/>
</dbReference>
<dbReference type="HAMAP" id="MF_01398">
    <property type="entry name" value="ATP_synth_b_bprime"/>
    <property type="match status" value="1"/>
</dbReference>
<dbReference type="InterPro" id="IPR028987">
    <property type="entry name" value="ATP_synth_B-like_membr_sf"/>
</dbReference>
<dbReference type="InterPro" id="IPR002146">
    <property type="entry name" value="ATP_synth_b/b'su_bac/chlpt"/>
</dbReference>
<dbReference type="InterPro" id="IPR005864">
    <property type="entry name" value="ATP_synth_F0_bsu_bac"/>
</dbReference>
<dbReference type="InterPro" id="IPR050059">
    <property type="entry name" value="ATP_synthase_B_chain"/>
</dbReference>
<dbReference type="NCBIfam" id="TIGR01144">
    <property type="entry name" value="ATP_synt_b"/>
    <property type="match status" value="1"/>
</dbReference>
<dbReference type="PANTHER" id="PTHR33445:SF1">
    <property type="entry name" value="ATP SYNTHASE SUBUNIT B"/>
    <property type="match status" value="1"/>
</dbReference>
<dbReference type="PANTHER" id="PTHR33445">
    <property type="entry name" value="ATP SYNTHASE SUBUNIT B', CHLOROPLASTIC"/>
    <property type="match status" value="1"/>
</dbReference>
<dbReference type="Pfam" id="PF00430">
    <property type="entry name" value="ATP-synt_B"/>
    <property type="match status" value="1"/>
</dbReference>
<dbReference type="SUPFAM" id="SSF81573">
    <property type="entry name" value="F1F0 ATP synthase subunit B, membrane domain"/>
    <property type="match status" value="1"/>
</dbReference>
<feature type="chain" id="PRO_0000368547" description="ATP synthase subunit b">
    <location>
        <begin position="1"/>
        <end position="171"/>
    </location>
</feature>
<feature type="transmembrane region" description="Helical" evidence="1">
    <location>
        <begin position="14"/>
        <end position="34"/>
    </location>
</feature>
<feature type="region of interest" description="Disordered" evidence="2">
    <location>
        <begin position="56"/>
        <end position="104"/>
    </location>
</feature>
<feature type="compositionally biased region" description="Basic and acidic residues" evidence="2">
    <location>
        <begin position="56"/>
        <end position="97"/>
    </location>
</feature>
<organism>
    <name type="scientific">Lactiplantibacillus plantarum (strain ATCC BAA-793 / NCIMB 8826 / WCFS1)</name>
    <name type="common">Lactobacillus plantarum</name>
    <dbReference type="NCBI Taxonomy" id="220668"/>
    <lineage>
        <taxon>Bacteria</taxon>
        <taxon>Bacillati</taxon>
        <taxon>Bacillota</taxon>
        <taxon>Bacilli</taxon>
        <taxon>Lactobacillales</taxon>
        <taxon>Lactobacillaceae</taxon>
        <taxon>Lactiplantibacillus</taxon>
    </lineage>
</organism>
<gene>
    <name evidence="1" type="primary">atpF</name>
    <name type="ordered locus">lp_2368</name>
</gene>
<accession>Q88UT9</accession>
<accession>F9UQR7</accession>
<sequence>MLSHLIIGASGLYLGDMLFIGISFIVLMALISVVAWKPITKMMADRADKIANDIDSAQKSRQEASDLADQRRDALSHSRAEASEIVADAKKSGEKQRSSIVADAQNEATQYKQNARKDIEQERQDALKNVQSDVADISVAIATKIIKKQLDPEGQQALINSYIEGLGKHES</sequence>